<name>SRX1_SCHPO</name>
<comment type="function">
    <text evidence="2">Contributes to oxidative stress resistance by reducing cysteine-sulfinic acid formed under exposure to oxidants in a peroxiredoxin. May catalyze the reduction in a multi-step process by acting both as a specific phosphotransferase and a thioltransferase.</text>
</comment>
<comment type="catalytic activity">
    <reaction evidence="5">
        <text>S-hydroxy-S-oxy-L-cysteinyl-[peroxiredoxin] + [protein]-dithiol + ATP = S-hydroxy-L-cysteinyl-[peroxiredoxin] + [protein]-disulfide + ADP + phosphate</text>
        <dbReference type="Rhea" id="RHEA:17545"/>
        <dbReference type="Rhea" id="RHEA-COMP:10593"/>
        <dbReference type="Rhea" id="RHEA-COMP:10594"/>
        <dbReference type="Rhea" id="RHEA-COMP:13681"/>
        <dbReference type="Rhea" id="RHEA-COMP:17976"/>
        <dbReference type="ChEBI" id="CHEBI:29950"/>
        <dbReference type="ChEBI" id="CHEBI:30616"/>
        <dbReference type="ChEBI" id="CHEBI:43474"/>
        <dbReference type="ChEBI" id="CHEBI:50058"/>
        <dbReference type="ChEBI" id="CHEBI:61973"/>
        <dbReference type="ChEBI" id="CHEBI:61974"/>
        <dbReference type="ChEBI" id="CHEBI:456216"/>
        <dbReference type="EC" id="1.8.98.2"/>
    </reaction>
</comment>
<comment type="subunit">
    <text evidence="2">Interacts with tpx1 in response to oxidative stress.</text>
</comment>
<comment type="subcellular location">
    <subcellularLocation>
        <location evidence="3">Cytoplasm</location>
    </subcellularLocation>
    <subcellularLocation>
        <location evidence="3">Nucleus</location>
    </subcellularLocation>
</comment>
<comment type="similarity">
    <text evidence="4">Belongs to the sulfiredoxin family.</text>
</comment>
<keyword id="KW-0049">Antioxidant</keyword>
<keyword id="KW-0067">ATP-binding</keyword>
<keyword id="KW-0963">Cytoplasm</keyword>
<keyword id="KW-1015">Disulfide bond</keyword>
<keyword id="KW-0547">Nucleotide-binding</keyword>
<keyword id="KW-0539">Nucleus</keyword>
<keyword id="KW-0560">Oxidoreductase</keyword>
<keyword id="KW-1185">Reference proteome</keyword>
<accession>Q9URV9</accession>
<evidence type="ECO:0000250" key="1"/>
<evidence type="ECO:0000269" key="2">
    <source>
    </source>
</evidence>
<evidence type="ECO:0000269" key="3">
    <source>
    </source>
</evidence>
<evidence type="ECO:0000305" key="4"/>
<evidence type="ECO:0000305" key="5">
    <source>
    </source>
</evidence>
<protein>
    <recommendedName>
        <fullName>Sulfiredoxin</fullName>
        <ecNumber evidence="5">1.8.98.2</ecNumber>
    </recommendedName>
</protein>
<dbReference type="EC" id="1.8.98.2" evidence="5"/>
<dbReference type="EMBL" id="CU329671">
    <property type="protein sequence ID" value="CAB53718.1"/>
    <property type="molecule type" value="Genomic_DNA"/>
</dbReference>
<dbReference type="PIR" id="T39259">
    <property type="entry name" value="T39259"/>
</dbReference>
<dbReference type="RefSeq" id="NP_595151.1">
    <property type="nucleotide sequence ID" value="NM_001021060.2"/>
</dbReference>
<dbReference type="SMR" id="Q9URV9"/>
<dbReference type="BioGRID" id="276607">
    <property type="interactions" value="4"/>
</dbReference>
<dbReference type="FunCoup" id="Q9URV9">
    <property type="interactions" value="393"/>
</dbReference>
<dbReference type="STRING" id="284812.Q9URV9"/>
<dbReference type="iPTMnet" id="Q9URV9"/>
<dbReference type="PaxDb" id="4896-SPBC106.02c.1"/>
<dbReference type="EnsemblFungi" id="SPBC106.02c.1">
    <property type="protein sequence ID" value="SPBC106.02c.1:pep"/>
    <property type="gene ID" value="SPBC106.02c"/>
</dbReference>
<dbReference type="GeneID" id="2540069"/>
<dbReference type="KEGG" id="spo:2540069"/>
<dbReference type="PomBase" id="SPBC106.02c">
    <property type="gene designation" value="srx1"/>
</dbReference>
<dbReference type="VEuPathDB" id="FungiDB:SPBC106.02c"/>
<dbReference type="eggNOG" id="KOG3388">
    <property type="taxonomic scope" value="Eukaryota"/>
</dbReference>
<dbReference type="HOGENOM" id="CLU_124532_1_1_1"/>
<dbReference type="InParanoid" id="Q9URV9"/>
<dbReference type="OMA" id="SQIRRPI"/>
<dbReference type="PhylomeDB" id="Q9URV9"/>
<dbReference type="Reactome" id="R-SPO-9818027">
    <property type="pathway name" value="NFE2L2 regulating anti-oxidant/detoxification enzymes"/>
</dbReference>
<dbReference type="PRO" id="PR:Q9URV9"/>
<dbReference type="Proteomes" id="UP000002485">
    <property type="component" value="Chromosome II"/>
</dbReference>
<dbReference type="GO" id="GO:0005737">
    <property type="term" value="C:cytoplasm"/>
    <property type="evidence" value="ECO:0000318"/>
    <property type="project" value="GO_Central"/>
</dbReference>
<dbReference type="GO" id="GO:0005829">
    <property type="term" value="C:cytosol"/>
    <property type="evidence" value="ECO:0007005"/>
    <property type="project" value="PomBase"/>
</dbReference>
<dbReference type="GO" id="GO:0005634">
    <property type="term" value="C:nucleus"/>
    <property type="evidence" value="ECO:0007005"/>
    <property type="project" value="PomBase"/>
</dbReference>
<dbReference type="GO" id="GO:0005524">
    <property type="term" value="F:ATP binding"/>
    <property type="evidence" value="ECO:0007669"/>
    <property type="project" value="UniProtKB-KW"/>
</dbReference>
<dbReference type="GO" id="GO:0032542">
    <property type="term" value="F:sulfiredoxin activity"/>
    <property type="evidence" value="ECO:0000314"/>
    <property type="project" value="PomBase"/>
</dbReference>
<dbReference type="GO" id="GO:1990748">
    <property type="term" value="P:cellular detoxification"/>
    <property type="evidence" value="ECO:0000303"/>
    <property type="project" value="PomBase"/>
</dbReference>
<dbReference type="GO" id="GO:0034599">
    <property type="term" value="P:cellular response to oxidative stress"/>
    <property type="evidence" value="ECO:0000316"/>
    <property type="project" value="PomBase"/>
</dbReference>
<dbReference type="CDD" id="cd16395">
    <property type="entry name" value="Srx"/>
    <property type="match status" value="1"/>
</dbReference>
<dbReference type="FunFam" id="3.90.1530.10:FF:000005">
    <property type="entry name" value="Sulfiredoxin"/>
    <property type="match status" value="1"/>
</dbReference>
<dbReference type="Gene3D" id="3.90.1530.10">
    <property type="entry name" value="Conserved hypothetical protein from pyrococcus furiosus pfu- 392566-001, ParB domain"/>
    <property type="match status" value="1"/>
</dbReference>
<dbReference type="InterPro" id="IPR003115">
    <property type="entry name" value="ParB/Sulfiredoxin_dom"/>
</dbReference>
<dbReference type="InterPro" id="IPR036086">
    <property type="entry name" value="ParB/Sulfiredoxin_sf"/>
</dbReference>
<dbReference type="InterPro" id="IPR016692">
    <property type="entry name" value="Sulfiredoxin"/>
</dbReference>
<dbReference type="PANTHER" id="PTHR21348">
    <property type="match status" value="1"/>
</dbReference>
<dbReference type="PANTHER" id="PTHR21348:SF2">
    <property type="entry name" value="SULFIREDOXIN-1"/>
    <property type="match status" value="1"/>
</dbReference>
<dbReference type="Pfam" id="PF02195">
    <property type="entry name" value="ParBc"/>
    <property type="match status" value="1"/>
</dbReference>
<dbReference type="PIRSF" id="PIRSF017267">
    <property type="entry name" value="Sulfiredoxin"/>
    <property type="match status" value="1"/>
</dbReference>
<dbReference type="SMART" id="SM00470">
    <property type="entry name" value="ParB"/>
    <property type="match status" value="1"/>
</dbReference>
<dbReference type="SUPFAM" id="SSF110849">
    <property type="entry name" value="ParB/Sulfiredoxin"/>
    <property type="match status" value="1"/>
</dbReference>
<sequence length="124" mass="13603">MTSIHTGSNNNIVELDMSELIRPIPPVLDMNKVNSMMETMTGKTPPASCGLTSEDLEAGELPPVDVLTFKKSGKPYYFAFGGCHRLRAHDEAGRKKVRCKLVNCSPNTLRLYLGASANKFLDSD</sequence>
<gene>
    <name type="primary">srx1</name>
    <name type="ORF">SPBC106.02c</name>
</gene>
<proteinExistence type="evidence at protein level"/>
<organism>
    <name type="scientific">Schizosaccharomyces pombe (strain 972 / ATCC 24843)</name>
    <name type="common">Fission yeast</name>
    <dbReference type="NCBI Taxonomy" id="284812"/>
    <lineage>
        <taxon>Eukaryota</taxon>
        <taxon>Fungi</taxon>
        <taxon>Dikarya</taxon>
        <taxon>Ascomycota</taxon>
        <taxon>Taphrinomycotina</taxon>
        <taxon>Schizosaccharomycetes</taxon>
        <taxon>Schizosaccharomycetales</taxon>
        <taxon>Schizosaccharomycetaceae</taxon>
        <taxon>Schizosaccharomyces</taxon>
    </lineage>
</organism>
<feature type="chain" id="PRO_0000211434" description="Sulfiredoxin">
    <location>
        <begin position="1"/>
        <end position="124"/>
    </location>
</feature>
<feature type="disulfide bond" description="Interchain" evidence="1">
    <location>
        <position position="83"/>
    </location>
</feature>
<reference key="1">
    <citation type="journal article" date="2002" name="Nature">
        <title>The genome sequence of Schizosaccharomyces pombe.</title>
        <authorList>
            <person name="Wood V."/>
            <person name="Gwilliam R."/>
            <person name="Rajandream M.A."/>
            <person name="Lyne M.H."/>
            <person name="Lyne R."/>
            <person name="Stewart A."/>
            <person name="Sgouros J.G."/>
            <person name="Peat N."/>
            <person name="Hayles J."/>
            <person name="Baker S.G."/>
            <person name="Basham D."/>
            <person name="Bowman S."/>
            <person name="Brooks K."/>
            <person name="Brown D."/>
            <person name="Brown S."/>
            <person name="Chillingworth T."/>
            <person name="Churcher C.M."/>
            <person name="Collins M."/>
            <person name="Connor R."/>
            <person name="Cronin A."/>
            <person name="Davis P."/>
            <person name="Feltwell T."/>
            <person name="Fraser A."/>
            <person name="Gentles S."/>
            <person name="Goble A."/>
            <person name="Hamlin N."/>
            <person name="Harris D.E."/>
            <person name="Hidalgo J."/>
            <person name="Hodgson G."/>
            <person name="Holroyd S."/>
            <person name="Hornsby T."/>
            <person name="Howarth S."/>
            <person name="Huckle E.J."/>
            <person name="Hunt S."/>
            <person name="Jagels K."/>
            <person name="James K.D."/>
            <person name="Jones L."/>
            <person name="Jones M."/>
            <person name="Leather S."/>
            <person name="McDonald S."/>
            <person name="McLean J."/>
            <person name="Mooney P."/>
            <person name="Moule S."/>
            <person name="Mungall K.L."/>
            <person name="Murphy L.D."/>
            <person name="Niblett D."/>
            <person name="Odell C."/>
            <person name="Oliver K."/>
            <person name="O'Neil S."/>
            <person name="Pearson D."/>
            <person name="Quail M.A."/>
            <person name="Rabbinowitsch E."/>
            <person name="Rutherford K.M."/>
            <person name="Rutter S."/>
            <person name="Saunders D."/>
            <person name="Seeger K."/>
            <person name="Sharp S."/>
            <person name="Skelton J."/>
            <person name="Simmonds M.N."/>
            <person name="Squares R."/>
            <person name="Squares S."/>
            <person name="Stevens K."/>
            <person name="Taylor K."/>
            <person name="Taylor R.G."/>
            <person name="Tivey A."/>
            <person name="Walsh S.V."/>
            <person name="Warren T."/>
            <person name="Whitehead S."/>
            <person name="Woodward J.R."/>
            <person name="Volckaert G."/>
            <person name="Aert R."/>
            <person name="Robben J."/>
            <person name="Grymonprez B."/>
            <person name="Weltjens I."/>
            <person name="Vanstreels E."/>
            <person name="Rieger M."/>
            <person name="Schaefer M."/>
            <person name="Mueller-Auer S."/>
            <person name="Gabel C."/>
            <person name="Fuchs M."/>
            <person name="Duesterhoeft A."/>
            <person name="Fritzc C."/>
            <person name="Holzer E."/>
            <person name="Moestl D."/>
            <person name="Hilbert H."/>
            <person name="Borzym K."/>
            <person name="Langer I."/>
            <person name="Beck A."/>
            <person name="Lehrach H."/>
            <person name="Reinhardt R."/>
            <person name="Pohl T.M."/>
            <person name="Eger P."/>
            <person name="Zimmermann W."/>
            <person name="Wedler H."/>
            <person name="Wambutt R."/>
            <person name="Purnelle B."/>
            <person name="Goffeau A."/>
            <person name="Cadieu E."/>
            <person name="Dreano S."/>
            <person name="Gloux S."/>
            <person name="Lelaure V."/>
            <person name="Mottier S."/>
            <person name="Galibert F."/>
            <person name="Aves S.J."/>
            <person name="Xiang Z."/>
            <person name="Hunt C."/>
            <person name="Moore K."/>
            <person name="Hurst S.M."/>
            <person name="Lucas M."/>
            <person name="Rochet M."/>
            <person name="Gaillardin C."/>
            <person name="Tallada V.A."/>
            <person name="Garzon A."/>
            <person name="Thode G."/>
            <person name="Daga R.R."/>
            <person name="Cruzado L."/>
            <person name="Jimenez J."/>
            <person name="Sanchez M."/>
            <person name="del Rey F."/>
            <person name="Benito J."/>
            <person name="Dominguez A."/>
            <person name="Revuelta J.L."/>
            <person name="Moreno S."/>
            <person name="Armstrong J."/>
            <person name="Forsburg S.L."/>
            <person name="Cerutti L."/>
            <person name="Lowe T."/>
            <person name="McCombie W.R."/>
            <person name="Paulsen I."/>
            <person name="Potashkin J."/>
            <person name="Shpakovski G.V."/>
            <person name="Ussery D."/>
            <person name="Barrell B.G."/>
            <person name="Nurse P."/>
        </authorList>
    </citation>
    <scope>NUCLEOTIDE SEQUENCE [LARGE SCALE GENOMIC DNA]</scope>
    <source>
        <strain>972 / ATCC 24843</strain>
    </source>
</reference>
<reference key="2">
    <citation type="journal article" date="2005" name="J. Biol. Chem.">
        <title>Oxidation of a eukaryotic 2-Cys peroxiredoxin is a molecular switch controlling the transcriptional response to increasing levels of hydrogen peroxide.</title>
        <authorList>
            <person name="Bozonet S.M."/>
            <person name="Findlay V.J."/>
            <person name="Day A.M."/>
            <person name="Cameron J."/>
            <person name="Veal E.A."/>
            <person name="Morgan B.A."/>
        </authorList>
    </citation>
    <scope>FUNCTION</scope>
    <scope>CATALYTIC ACTIVITY</scope>
    <scope>INTERACTION WITH TPX1</scope>
</reference>
<reference key="3">
    <citation type="journal article" date="2006" name="Nat. Biotechnol.">
        <title>ORFeome cloning and global analysis of protein localization in the fission yeast Schizosaccharomyces pombe.</title>
        <authorList>
            <person name="Matsuyama A."/>
            <person name="Arai R."/>
            <person name="Yashiroda Y."/>
            <person name="Shirai A."/>
            <person name="Kamata A."/>
            <person name="Sekido S."/>
            <person name="Kobayashi Y."/>
            <person name="Hashimoto A."/>
            <person name="Hamamoto M."/>
            <person name="Hiraoka Y."/>
            <person name="Horinouchi S."/>
            <person name="Yoshida M."/>
        </authorList>
    </citation>
    <scope>SUBCELLULAR LOCATION [LARGE SCALE ANALYSIS]</scope>
</reference>